<protein>
    <recommendedName>
        <fullName>Calpain-2 catalytic subunit</fullName>
        <ecNumber>3.4.22.53</ecNumber>
    </recommendedName>
    <alternativeName>
        <fullName>Calcium-activated neutral proteinase 2</fullName>
        <shortName>CANP 2</shortName>
    </alternativeName>
    <alternativeName>
        <fullName>Calpain M-type</fullName>
    </alternativeName>
    <alternativeName>
        <fullName>Calpain-2 large subunit</fullName>
    </alternativeName>
    <alternativeName>
        <fullName>Millimolar-calpain</fullName>
        <shortName>M-calpain</shortName>
    </alternativeName>
</protein>
<accession>Q92178</accession>
<name>CAN2_CHICK</name>
<reference key="1">
    <citation type="journal article" date="1995" name="Biochim. Biophys. Acta">
        <title>Identification of a third ubiquitous calpain species -- chicken muscle expresses four distinct calpains.</title>
        <authorList>
            <person name="Sorimachi H."/>
            <person name="Tsukahara T."/>
            <person name="Okada-Ban M."/>
            <person name="Sugita H."/>
            <person name="Ishiura S."/>
            <person name="Suzuki K."/>
        </authorList>
    </citation>
    <scope>NUCLEOTIDE SEQUENCE [MRNA]</scope>
    <source>
        <tissue>Muscle</tissue>
    </source>
</reference>
<sequence>MAGMAAALAKERAAAAGAGRHGQAVPYLGQDFGALRRECLQGGRLFHDPSFPAGPAALGYRELGPNSYKTKGVVWCRPTELCSCPRFIAGGATRTDICQGALGDCWLLAAIASLTLNEEILARVVPRDQSFQDEYAGIFHFQFWQYGEWVDVVVDDRLPTKNGELLFVHSAEGSEFWSALLEKAYAKLNGSYEALSGGTTTEGFEDFTGGIAEWYELQKAPPNLFKIIQKALQKGSLLGCSIDITSAAETEAVTSQKLVKGHAYSVTGAEEVNFRGSIQKLIRIRNPWGEVEWTGKWNDNCPNWSGVDPEVRERLTRRHEDGEFWMAFNDFLRHYSRLEICNLTPDTLASDRYKKWSLLKLDGNWRRGATAGGCRNYPNTFWTNPQYLIKLEEEDEDPDDPEGGCTFLIGLIQKHRRKQRKMGEDMHTIGFAIYEVPPEFSGQTNIHLSKNFFLTNKAREKSNTFINLREVLNRFKLPAGEYIIVPSTFEPNLNGDFCLRVFSEKNANSTVIDDEIEANFEETEIDEDDIEPSFKKLFGQLAGSDAEISAFELRSILNKILAKRQDIKSDGFSIETCKIMVDLLDNDGSGKLGLKEFHTLWTKIQKYQKIYREIDVDRSGTMNSYEMRRALEAAGFKLSCQLHQIIVARFADEDLIIDFDNCVRCLIRLETLYKMFRKLDTEKTGTIELNLINWLFFTVI</sequence>
<dbReference type="EC" id="3.4.22.53"/>
<dbReference type="EMBL" id="D38026">
    <property type="protein sequence ID" value="BAA07228.1"/>
    <property type="molecule type" value="mRNA"/>
</dbReference>
<dbReference type="PIR" id="S57194">
    <property type="entry name" value="S57194"/>
</dbReference>
<dbReference type="RefSeq" id="NP_990411.1">
    <property type="nucleotide sequence ID" value="NM_205080.1"/>
</dbReference>
<dbReference type="SMR" id="Q92178"/>
<dbReference type="BioGRID" id="676236">
    <property type="interactions" value="2"/>
</dbReference>
<dbReference type="FunCoup" id="Q92178">
    <property type="interactions" value="1742"/>
</dbReference>
<dbReference type="STRING" id="9031.ENSGALP00000015229"/>
<dbReference type="MEROPS" id="C02.002"/>
<dbReference type="PaxDb" id="9031-ENSGALP00000015229"/>
<dbReference type="GeneID" id="395963"/>
<dbReference type="KEGG" id="gga:395963"/>
<dbReference type="CTD" id="824"/>
<dbReference type="VEuPathDB" id="HostDB:geneid_395963"/>
<dbReference type="eggNOG" id="KOG0045">
    <property type="taxonomic scope" value="Eukaryota"/>
</dbReference>
<dbReference type="InParanoid" id="Q92178"/>
<dbReference type="OrthoDB" id="424753at2759"/>
<dbReference type="PhylomeDB" id="Q92178"/>
<dbReference type="BRENDA" id="3.4.22.53">
    <property type="organism ID" value="1306"/>
</dbReference>
<dbReference type="PRO" id="PR:Q92178"/>
<dbReference type="Proteomes" id="UP000000539">
    <property type="component" value="Unassembled WGS sequence"/>
</dbReference>
<dbReference type="GO" id="GO:0005737">
    <property type="term" value="C:cytoplasm"/>
    <property type="evidence" value="ECO:0000250"/>
    <property type="project" value="UniProtKB"/>
</dbReference>
<dbReference type="GO" id="GO:0030425">
    <property type="term" value="C:dendrite"/>
    <property type="evidence" value="ECO:0000250"/>
    <property type="project" value="UniProtKB"/>
</dbReference>
<dbReference type="GO" id="GO:0005886">
    <property type="term" value="C:plasma membrane"/>
    <property type="evidence" value="ECO:0007669"/>
    <property type="project" value="UniProtKB-SubCell"/>
</dbReference>
<dbReference type="GO" id="GO:0005509">
    <property type="term" value="F:calcium ion binding"/>
    <property type="evidence" value="ECO:0007669"/>
    <property type="project" value="InterPro"/>
</dbReference>
<dbReference type="GO" id="GO:0004198">
    <property type="term" value="F:calcium-dependent cysteine-type endopeptidase activity"/>
    <property type="evidence" value="ECO:0000250"/>
    <property type="project" value="UniProtKB"/>
</dbReference>
<dbReference type="GO" id="GO:1990782">
    <property type="term" value="F:protein tyrosine kinase binding"/>
    <property type="evidence" value="ECO:0000353"/>
    <property type="project" value="AgBase"/>
</dbReference>
<dbReference type="GO" id="GO:0071230">
    <property type="term" value="P:cellular response to amino acid stimulus"/>
    <property type="evidence" value="ECO:0000250"/>
    <property type="project" value="UniProtKB"/>
</dbReference>
<dbReference type="GO" id="GO:0006508">
    <property type="term" value="P:proteolysis"/>
    <property type="evidence" value="ECO:0000250"/>
    <property type="project" value="UniProtKB"/>
</dbReference>
<dbReference type="CDD" id="cd00214">
    <property type="entry name" value="Calpain_III"/>
    <property type="match status" value="1"/>
</dbReference>
<dbReference type="CDD" id="cd00044">
    <property type="entry name" value="CysPc"/>
    <property type="match status" value="1"/>
</dbReference>
<dbReference type="CDD" id="cd16199">
    <property type="entry name" value="EFh_PEF_CAPN2"/>
    <property type="match status" value="1"/>
</dbReference>
<dbReference type="FunFam" id="2.60.120.380:FF:000001">
    <property type="entry name" value="Calpain-1 catalytic subunit"/>
    <property type="match status" value="1"/>
</dbReference>
<dbReference type="FunFam" id="3.90.70.10:FF:000001">
    <property type="entry name" value="Calpain-1 catalytic subunit"/>
    <property type="match status" value="1"/>
</dbReference>
<dbReference type="FunFam" id="1.10.238.10:FF:000099">
    <property type="entry name" value="calpain-2 catalytic subunit"/>
    <property type="match status" value="1"/>
</dbReference>
<dbReference type="Gene3D" id="2.60.120.380">
    <property type="match status" value="1"/>
</dbReference>
<dbReference type="Gene3D" id="3.90.70.10">
    <property type="entry name" value="Cysteine proteinases"/>
    <property type="match status" value="1"/>
</dbReference>
<dbReference type="Gene3D" id="1.10.238.10">
    <property type="entry name" value="EF-hand"/>
    <property type="match status" value="1"/>
</dbReference>
<dbReference type="InterPro" id="IPR033883">
    <property type="entry name" value="C2_III"/>
</dbReference>
<dbReference type="InterPro" id="IPR022684">
    <property type="entry name" value="Calpain_cysteine_protease"/>
</dbReference>
<dbReference type="InterPro" id="IPR022682">
    <property type="entry name" value="Calpain_domain_III"/>
</dbReference>
<dbReference type="InterPro" id="IPR022683">
    <property type="entry name" value="Calpain_III"/>
</dbReference>
<dbReference type="InterPro" id="IPR036213">
    <property type="entry name" value="Calpain_III_sf"/>
</dbReference>
<dbReference type="InterPro" id="IPR011992">
    <property type="entry name" value="EF-hand-dom_pair"/>
</dbReference>
<dbReference type="InterPro" id="IPR018247">
    <property type="entry name" value="EF_Hand_1_Ca_BS"/>
</dbReference>
<dbReference type="InterPro" id="IPR002048">
    <property type="entry name" value="EF_hand_dom"/>
</dbReference>
<dbReference type="InterPro" id="IPR042736">
    <property type="entry name" value="EFh_PEF_CAPN2"/>
</dbReference>
<dbReference type="InterPro" id="IPR038765">
    <property type="entry name" value="Papain-like_cys_pep_sf"/>
</dbReference>
<dbReference type="InterPro" id="IPR000169">
    <property type="entry name" value="Pept_cys_AS"/>
</dbReference>
<dbReference type="InterPro" id="IPR001300">
    <property type="entry name" value="Peptidase_C2_calpain_cat"/>
</dbReference>
<dbReference type="PANTHER" id="PTHR10183">
    <property type="entry name" value="CALPAIN"/>
    <property type="match status" value="1"/>
</dbReference>
<dbReference type="PANTHER" id="PTHR10183:SF268">
    <property type="entry name" value="CALPAIN-2 CATALYTIC SUBUNIT"/>
    <property type="match status" value="1"/>
</dbReference>
<dbReference type="Pfam" id="PF01067">
    <property type="entry name" value="Calpain_III"/>
    <property type="match status" value="1"/>
</dbReference>
<dbReference type="Pfam" id="PF13833">
    <property type="entry name" value="EF-hand_8"/>
    <property type="match status" value="1"/>
</dbReference>
<dbReference type="Pfam" id="PF00648">
    <property type="entry name" value="Peptidase_C2"/>
    <property type="match status" value="1"/>
</dbReference>
<dbReference type="PRINTS" id="PR00704">
    <property type="entry name" value="CALPAIN"/>
</dbReference>
<dbReference type="SMART" id="SM00720">
    <property type="entry name" value="calpain_III"/>
    <property type="match status" value="1"/>
</dbReference>
<dbReference type="SMART" id="SM00230">
    <property type="entry name" value="CysPc"/>
    <property type="match status" value="1"/>
</dbReference>
<dbReference type="SMART" id="SM00054">
    <property type="entry name" value="EFh"/>
    <property type="match status" value="3"/>
</dbReference>
<dbReference type="SUPFAM" id="SSF49758">
    <property type="entry name" value="Calpain large subunit, middle domain (domain III)"/>
    <property type="match status" value="1"/>
</dbReference>
<dbReference type="SUPFAM" id="SSF54001">
    <property type="entry name" value="Cysteine proteinases"/>
    <property type="match status" value="1"/>
</dbReference>
<dbReference type="SUPFAM" id="SSF47473">
    <property type="entry name" value="EF-hand"/>
    <property type="match status" value="1"/>
</dbReference>
<dbReference type="PROSITE" id="PS50203">
    <property type="entry name" value="CALPAIN_CAT"/>
    <property type="match status" value="1"/>
</dbReference>
<dbReference type="PROSITE" id="PS00018">
    <property type="entry name" value="EF_HAND_1"/>
    <property type="match status" value="2"/>
</dbReference>
<dbReference type="PROSITE" id="PS50222">
    <property type="entry name" value="EF_HAND_2"/>
    <property type="match status" value="3"/>
</dbReference>
<dbReference type="PROSITE" id="PS00139">
    <property type="entry name" value="THIOL_PROTEASE_CYS"/>
    <property type="match status" value="1"/>
</dbReference>
<gene>
    <name type="primary">CAPN2</name>
</gene>
<proteinExistence type="evidence at transcript level"/>
<organism>
    <name type="scientific">Gallus gallus</name>
    <name type="common">Chicken</name>
    <dbReference type="NCBI Taxonomy" id="9031"/>
    <lineage>
        <taxon>Eukaryota</taxon>
        <taxon>Metazoa</taxon>
        <taxon>Chordata</taxon>
        <taxon>Craniata</taxon>
        <taxon>Vertebrata</taxon>
        <taxon>Euteleostomi</taxon>
        <taxon>Archelosauria</taxon>
        <taxon>Archosauria</taxon>
        <taxon>Dinosauria</taxon>
        <taxon>Saurischia</taxon>
        <taxon>Theropoda</taxon>
        <taxon>Coelurosauria</taxon>
        <taxon>Aves</taxon>
        <taxon>Neognathae</taxon>
        <taxon>Galloanserae</taxon>
        <taxon>Galliformes</taxon>
        <taxon>Phasianidae</taxon>
        <taxon>Phasianinae</taxon>
        <taxon>Gallus</taxon>
    </lineage>
</organism>
<evidence type="ECO:0000250" key="1"/>
<evidence type="ECO:0000255" key="2"/>
<evidence type="ECO:0000255" key="3">
    <source>
        <dbReference type="PROSITE-ProRule" id="PRU00239"/>
    </source>
</evidence>
<evidence type="ECO:0000255" key="4">
    <source>
        <dbReference type="PROSITE-ProRule" id="PRU00448"/>
    </source>
</evidence>
<evidence type="ECO:0000305" key="5"/>
<feature type="initiator methionine" description="Removed" evidence="1">
    <location>
        <position position="1"/>
    </location>
</feature>
<feature type="propeptide" id="PRO_0000026495" description="Anchors to the small subunit" evidence="2">
    <location>
        <begin position="2"/>
        <end position="19"/>
    </location>
</feature>
<feature type="chain" id="PRO_0000026496" description="Calpain-2 catalytic subunit">
    <location>
        <begin position="20"/>
        <end position="700"/>
    </location>
</feature>
<feature type="domain" description="Calpain catalytic" evidence="3">
    <location>
        <begin position="45"/>
        <end position="344"/>
    </location>
</feature>
<feature type="domain" description="EF-hand 1" evidence="4">
    <location>
        <begin position="572"/>
        <end position="605"/>
    </location>
</feature>
<feature type="domain" description="EF-hand 2" evidence="4">
    <location>
        <begin position="602"/>
        <end position="637"/>
    </location>
</feature>
<feature type="domain" description="EF-hand 3" evidence="4">
    <location>
        <begin position="667"/>
        <end position="700"/>
    </location>
</feature>
<feature type="region of interest" description="Domain III">
    <location>
        <begin position="345"/>
        <end position="514"/>
    </location>
</feature>
<feature type="region of interest" description="Linker">
    <location>
        <begin position="515"/>
        <end position="529"/>
    </location>
</feature>
<feature type="region of interest" description="Domain IV">
    <location>
        <begin position="530"/>
        <end position="700"/>
    </location>
</feature>
<feature type="active site" evidence="1">
    <location>
        <position position="105"/>
    </location>
</feature>
<feature type="active site" evidence="1">
    <location>
        <position position="262"/>
    </location>
</feature>
<feature type="active site" evidence="1">
    <location>
        <position position="286"/>
    </location>
</feature>
<feature type="binding site" evidence="1">
    <location>
        <position position="91"/>
    </location>
    <ligand>
        <name>Ca(2+)</name>
        <dbReference type="ChEBI" id="CHEBI:29108"/>
        <label>3</label>
    </ligand>
</feature>
<feature type="binding site" evidence="1">
    <location>
        <position position="96"/>
    </location>
    <ligand>
        <name>Ca(2+)</name>
        <dbReference type="ChEBI" id="CHEBI:29108"/>
        <label>3</label>
    </ligand>
</feature>
<feature type="binding site" evidence="1">
    <location>
        <position position="175"/>
    </location>
    <ligand>
        <name>Ca(2+)</name>
        <dbReference type="ChEBI" id="CHEBI:29108"/>
        <label>3</label>
    </ligand>
</feature>
<feature type="binding site" evidence="1">
    <location>
        <position position="229"/>
    </location>
    <ligand>
        <name>Ca(2+)</name>
        <dbReference type="ChEBI" id="CHEBI:29108"/>
        <label>2</label>
    </ligand>
</feature>
<feature type="binding site" evidence="1">
    <location>
        <position position="230"/>
    </location>
    <ligand>
        <name>Ca(2+)</name>
        <dbReference type="ChEBI" id="CHEBI:29108"/>
        <label>2</label>
    </ligand>
</feature>
<feature type="binding site" evidence="1">
    <location>
        <position position="292"/>
    </location>
    <ligand>
        <name>Ca(2+)</name>
        <dbReference type="ChEBI" id="CHEBI:29108"/>
        <label>4</label>
    </ligand>
</feature>
<feature type="binding site" evidence="1">
    <location>
        <position position="299"/>
    </location>
    <ligand>
        <name>Ca(2+)</name>
        <dbReference type="ChEBI" id="CHEBI:29108"/>
        <label>4</label>
    </ligand>
</feature>
<feature type="binding site" evidence="1">
    <location>
        <position position="323"/>
    </location>
    <ligand>
        <name>Ca(2+)</name>
        <dbReference type="ChEBI" id="CHEBI:29108"/>
        <label>4</label>
    </ligand>
</feature>
<feature type="binding site" evidence="1">
    <location>
        <position position="542"/>
    </location>
    <ligand>
        <name>Ca(2+)</name>
        <dbReference type="ChEBI" id="CHEBI:29108"/>
        <label>5</label>
    </ligand>
</feature>
<feature type="binding site" evidence="1">
    <location>
        <position position="545"/>
    </location>
    <ligand>
        <name>Ca(2+)</name>
        <dbReference type="ChEBI" id="CHEBI:29108"/>
        <label>5</label>
    </ligand>
</feature>
<feature type="binding site" evidence="1">
    <location>
        <position position="547"/>
    </location>
    <ligand>
        <name>Ca(2+)</name>
        <dbReference type="ChEBI" id="CHEBI:29108"/>
        <label>5</label>
    </ligand>
</feature>
<feature type="binding site" evidence="1">
    <location>
        <position position="552"/>
    </location>
    <ligand>
        <name>Ca(2+)</name>
        <dbReference type="ChEBI" id="CHEBI:29108"/>
        <label>5</label>
    </ligand>
</feature>
<feature type="binding site" evidence="4">
    <location>
        <position position="585"/>
    </location>
    <ligand>
        <name>Ca(2+)</name>
        <dbReference type="ChEBI" id="CHEBI:29108"/>
        <label>6</label>
    </ligand>
</feature>
<feature type="binding site" evidence="4">
    <location>
        <position position="587"/>
    </location>
    <ligand>
        <name>Ca(2+)</name>
        <dbReference type="ChEBI" id="CHEBI:29108"/>
        <label>6</label>
    </ligand>
</feature>
<feature type="binding site" evidence="4">
    <location>
        <position position="589"/>
    </location>
    <ligand>
        <name>Ca(2+)</name>
        <dbReference type="ChEBI" id="CHEBI:29108"/>
        <label>6</label>
    </ligand>
</feature>
<feature type="binding site" evidence="4">
    <location>
        <position position="591"/>
    </location>
    <ligand>
        <name>Ca(2+)</name>
        <dbReference type="ChEBI" id="CHEBI:29108"/>
        <label>6</label>
    </ligand>
</feature>
<feature type="binding site" evidence="4">
    <location>
        <position position="596"/>
    </location>
    <ligand>
        <name>Ca(2+)</name>
        <dbReference type="ChEBI" id="CHEBI:29108"/>
        <label>6</label>
    </ligand>
</feature>
<feature type="binding site" evidence="4">
    <location>
        <position position="615"/>
    </location>
    <ligand>
        <name>Ca(2+)</name>
        <dbReference type="ChEBI" id="CHEBI:29108"/>
        <label>7</label>
    </ligand>
</feature>
<feature type="binding site" evidence="4">
    <location>
        <position position="617"/>
    </location>
    <ligand>
        <name>Ca(2+)</name>
        <dbReference type="ChEBI" id="CHEBI:29108"/>
        <label>7</label>
    </ligand>
</feature>
<feature type="binding site" evidence="4">
    <location>
        <position position="619"/>
    </location>
    <ligand>
        <name>Ca(2+)</name>
        <dbReference type="ChEBI" id="CHEBI:29108"/>
        <label>7</label>
    </ligand>
</feature>
<feature type="binding site" evidence="4">
    <location>
        <position position="621"/>
    </location>
    <ligand>
        <name>Ca(2+)</name>
        <dbReference type="ChEBI" id="CHEBI:29108"/>
        <label>7</label>
    </ligand>
</feature>
<feature type="binding site" evidence="4">
    <location>
        <position position="626"/>
    </location>
    <ligand>
        <name>Ca(2+)</name>
        <dbReference type="ChEBI" id="CHEBI:29108"/>
        <label>7</label>
    </ligand>
</feature>
<feature type="binding site" evidence="1">
    <location>
        <position position="658"/>
    </location>
    <ligand>
        <name>Ca(2+)</name>
        <dbReference type="ChEBI" id="CHEBI:29108"/>
        <label>1</label>
    </ligand>
</feature>
<feature type="binding site" evidence="1">
    <location>
        <position position="661"/>
    </location>
    <ligand>
        <name>Ca(2+)</name>
        <dbReference type="ChEBI" id="CHEBI:29108"/>
        <label>1</label>
    </ligand>
</feature>
<comment type="function">
    <text evidence="1">Calcium-regulated non-lysosomal thiol-protease which catalyze limited proteolysis of substrates involved in cytoskeletal remodeling and signal transduction.</text>
</comment>
<comment type="catalytic activity">
    <reaction>
        <text>Broad endopeptidase specificity.</text>
        <dbReference type="EC" id="3.4.22.53"/>
    </reaction>
</comment>
<comment type="cofactor">
    <cofactor evidence="1">
        <name>Ca(2+)</name>
        <dbReference type="ChEBI" id="CHEBI:29108"/>
    </cofactor>
    <text evidence="1">Binds 7 Ca(2+) ions.</text>
</comment>
<comment type="activity regulation">
    <text>Activated by 200-1000 micromolar concentrations of calcium and inhibited by calpastatin.</text>
</comment>
<comment type="subunit">
    <text>Forms a heterodimer with a small (regulatory) subunit (CAPNS1).</text>
</comment>
<comment type="subcellular location">
    <subcellularLocation>
        <location evidence="1">Cytoplasm</location>
    </subcellularLocation>
    <subcellularLocation>
        <location evidence="1">Cell membrane</location>
    </subcellularLocation>
    <text evidence="1">Translocates to the plasma membrane upon Ca(2+) binding.</text>
</comment>
<comment type="tissue specificity">
    <text>Ubiquitous.</text>
</comment>
<comment type="similarity">
    <text evidence="5">Belongs to the peptidase C2 family.</text>
</comment>
<keyword id="KW-0106">Calcium</keyword>
<keyword id="KW-1003">Cell membrane</keyword>
<keyword id="KW-0963">Cytoplasm</keyword>
<keyword id="KW-0378">Hydrolase</keyword>
<keyword id="KW-0472">Membrane</keyword>
<keyword id="KW-0479">Metal-binding</keyword>
<keyword id="KW-0645">Protease</keyword>
<keyword id="KW-1185">Reference proteome</keyword>
<keyword id="KW-0677">Repeat</keyword>
<keyword id="KW-0788">Thiol protease</keyword>